<keyword id="KW-0024">Alternative initiation</keyword>
<keyword id="KW-0167">Capsid protein</keyword>
<keyword id="KW-1139">Helical capsid protein</keyword>
<keyword id="KW-1185">Reference proteome</keyword>
<keyword id="KW-0946">Virion</keyword>
<gene>
    <name type="primary">CP</name>
</gene>
<name>CAPSD_SBWMN</name>
<dbReference type="EMBL" id="L07938">
    <property type="protein sequence ID" value="AAA48494.1"/>
    <property type="molecule type" value="Genomic_RNA"/>
</dbReference>
<dbReference type="PIR" id="S49244">
    <property type="entry name" value="S49244"/>
</dbReference>
<dbReference type="RefSeq" id="NP_049339.1">
    <property type="nucleotide sequence ID" value="NC_002042.1"/>
</dbReference>
<dbReference type="KEGG" id="vg:991050"/>
<dbReference type="Proteomes" id="UP000009270">
    <property type="component" value="Genome"/>
</dbReference>
<dbReference type="GO" id="GO:0019029">
    <property type="term" value="C:helical viral capsid"/>
    <property type="evidence" value="ECO:0007669"/>
    <property type="project" value="UniProtKB-KW"/>
</dbReference>
<dbReference type="GO" id="GO:0005198">
    <property type="term" value="F:structural molecule activity"/>
    <property type="evidence" value="ECO:0007669"/>
    <property type="project" value="InterPro"/>
</dbReference>
<dbReference type="Gene3D" id="1.20.120.70">
    <property type="entry name" value="Tobacco mosaic virus-like, coat protein"/>
    <property type="match status" value="1"/>
</dbReference>
<dbReference type="InterPro" id="IPR001337">
    <property type="entry name" value="TMV-like_coat"/>
</dbReference>
<dbReference type="InterPro" id="IPR036417">
    <property type="entry name" value="TMV-like_coat_sf"/>
</dbReference>
<dbReference type="Pfam" id="PF00721">
    <property type="entry name" value="TMV_coat"/>
    <property type="match status" value="1"/>
</dbReference>
<dbReference type="SUPFAM" id="SSF47195">
    <property type="entry name" value="TMV-like viral coat proteins"/>
    <property type="match status" value="1"/>
</dbReference>
<feature type="chain" id="PRO_0000412279" description="Capsid protein">
    <location>
        <begin position="1"/>
        <end position="176"/>
    </location>
</feature>
<feature type="region of interest" description="Disordered" evidence="1">
    <location>
        <begin position="103"/>
        <end position="132"/>
    </location>
</feature>
<feature type="splice variant" id="VSP_041680" description="In isoform N-CP." evidence="3">
    <original>M</original>
    <variation>MDKFARLKDQVDLSLQKAAGKVTAESTGPLLPKVTTPLPVM</variation>
    <location>
        <position position="1"/>
    </location>
</feature>
<comment type="function">
    <text evidence="2">Capsid protein self-assembles to form rod-shaped virions about 20 nm in diameter with a central canal enclosing the viral genomic RNA. Isoform N-CP does not seem to be required for virion formation and systemic infection in host plant.</text>
</comment>
<comment type="subcellular location">
    <subcellularLocation>
        <location evidence="3">Virion</location>
    </subcellularLocation>
</comment>
<comment type="alternative products">
    <event type="alternative initiation"/>
    <isoform>
        <id>Q06388-1</id>
        <name>Capsid protein</name>
        <sequence type="displayed"/>
    </isoform>
    <isoform>
        <id>Q06388-2</id>
        <name>N-CP</name>
        <name>24-kDa extended protein</name>
        <sequence type="described" ref="VSP_041680"/>
    </isoform>
</comment>
<comment type="miscellaneous">
    <molecule>Isoform N-CP</molecule>
    <text evidence="3">Translationally initiated at a CTG codon 120 nucleotides upstream of the ATG initiation codon for the CP gene.</text>
</comment>
<comment type="similarity">
    <text evidence="3">Belongs to the virgaviridae capsid protein family.</text>
</comment>
<evidence type="ECO:0000256" key="1">
    <source>
        <dbReference type="SAM" id="MobiDB-lite"/>
    </source>
</evidence>
<evidence type="ECO:0000269" key="2">
    <source>
    </source>
</evidence>
<evidence type="ECO:0000305" key="3"/>
<accession>Q06388</accession>
<organismHost>
    <name type="scientific">Hordeum vulgare</name>
    <name type="common">Barley</name>
    <dbReference type="NCBI Taxonomy" id="4513"/>
</organismHost>
<organismHost>
    <name type="scientific">Triticum</name>
    <dbReference type="NCBI Taxonomy" id="4564"/>
</organismHost>
<reference key="1">
    <citation type="journal article" date="1993" name="Virology">
        <title>Complete nucleotide sequence and organization of the bipartite RNA genome of soil-borne wheat mosaic virus.</title>
        <authorList>
            <person name="Shirako Y."/>
            <person name="Wilson T.M."/>
        </authorList>
    </citation>
    <scope>NUCLEOTIDE SEQUENCE [GENOMIC RNA]</scope>
</reference>
<reference key="2">
    <citation type="journal article" date="1998" name="J. Virol.">
        <title>Non-AUG translation initiation in a plant RNA virus: a forty-amino-acid extension is added to the N terminus of the soil-borne wheat mosaic virus capsid protein.</title>
        <authorList>
            <person name="Shirako Y."/>
        </authorList>
    </citation>
    <scope>ALTERNATIVE INITIATION</scope>
</reference>
<reference key="3">
    <citation type="journal article" date="2000" name="Virology">
        <title>Construction of full-length cDNA clones to Soil-borne wheat mosaic virus RNA1 and RNA2, from which infectious RNAs are transcribed in vitro: virion formation and systemic infection without expression of the N-terminal and C-terminal extensions to the capsid protein.</title>
        <authorList>
            <person name="Yamamiya A."/>
            <person name="Shirako Y."/>
        </authorList>
    </citation>
    <scope>FUNCTION OF ISOFORM N-CP</scope>
    <source>
        <strain>Isolate -/Japan/JT/1982</strain>
    </source>
</reference>
<proteinExistence type="inferred from homology"/>
<sequence length="176" mass="19289">MAVNKGYTGYNKELNAMAATHAYIRLSTLMSQIESWQATRASVLTHLGVMLNGVSKLGERSFFSRTKRFGAHTSDGDEIFCDLGGEAVTQILSRLTVALQSARGEGAQTRNAKRGAAPGTSQVENEEQGQTDQTLAISNAVAELMIFVRTKDFTMNECYTQDSFEAKYNLKWEGSS</sequence>
<protein>
    <recommendedName>
        <fullName>Capsid protein</fullName>
    </recommendedName>
    <alternativeName>
        <fullName>Coat protein</fullName>
    </alternativeName>
    <alternativeName>
        <fullName>P19</fullName>
    </alternativeName>
</protein>
<organism>
    <name type="scientific">Soil-borne wheat mosaic virus (strain United States/Nebraska/1981)</name>
    <name type="common">SBWMV</name>
    <dbReference type="NCBI Taxonomy" id="652673"/>
    <lineage>
        <taxon>Viruses</taxon>
        <taxon>Riboviria</taxon>
        <taxon>Orthornavirae</taxon>
        <taxon>Kitrinoviricota</taxon>
        <taxon>Alsuviricetes</taxon>
        <taxon>Martellivirales</taxon>
        <taxon>Virgaviridae</taxon>
        <taxon>Furovirus</taxon>
        <taxon>Soil-borne wheat mosaic virus</taxon>
    </lineage>
</organism>